<accession>A0L1Q1</accession>
<keyword id="KW-0963">Cytoplasm</keyword>
<keyword id="KW-0238">DNA-binding</keyword>
<keyword id="KW-0677">Repeat</keyword>
<keyword id="KW-0804">Transcription</keyword>
<keyword id="KW-0805">Transcription regulation</keyword>
<reference key="1">
    <citation type="submission" date="2006-09" db="EMBL/GenBank/DDBJ databases">
        <title>Complete sequence of chromosome 1 of Shewanella sp. ANA-3.</title>
        <authorList>
            <person name="Copeland A."/>
            <person name="Lucas S."/>
            <person name="Lapidus A."/>
            <person name="Barry K."/>
            <person name="Detter J.C."/>
            <person name="Glavina del Rio T."/>
            <person name="Hammon N."/>
            <person name="Israni S."/>
            <person name="Dalin E."/>
            <person name="Tice H."/>
            <person name="Pitluck S."/>
            <person name="Chertkov O."/>
            <person name="Brettin T."/>
            <person name="Bruce D."/>
            <person name="Han C."/>
            <person name="Tapia R."/>
            <person name="Gilna P."/>
            <person name="Schmutz J."/>
            <person name="Larimer F."/>
            <person name="Land M."/>
            <person name="Hauser L."/>
            <person name="Kyrpides N."/>
            <person name="Kim E."/>
            <person name="Newman D."/>
            <person name="Salticov C."/>
            <person name="Konstantinidis K."/>
            <person name="Klappenback J."/>
            <person name="Tiedje J."/>
            <person name="Richardson P."/>
        </authorList>
    </citation>
    <scope>NUCLEOTIDE SEQUENCE [LARGE SCALE GENOMIC DNA]</scope>
    <source>
        <strain>ANA-3</strain>
    </source>
</reference>
<comment type="subunit">
    <text evidence="1">Forms oligomers.</text>
</comment>
<comment type="subcellular location">
    <subcellularLocation>
        <location evidence="1">Cytoplasm</location>
        <location evidence="1">Nucleoid</location>
    </subcellularLocation>
</comment>
<comment type="similarity">
    <text evidence="1">Belongs to the MraZ family.</text>
</comment>
<dbReference type="EMBL" id="CP000469">
    <property type="protein sequence ID" value="ABK49970.1"/>
    <property type="molecule type" value="Genomic_DNA"/>
</dbReference>
<dbReference type="RefSeq" id="WP_011624306.1">
    <property type="nucleotide sequence ID" value="NC_008577.1"/>
</dbReference>
<dbReference type="SMR" id="A0L1Q1"/>
<dbReference type="STRING" id="94122.Shewana3_3752"/>
<dbReference type="KEGG" id="shn:Shewana3_3752"/>
<dbReference type="eggNOG" id="COG2001">
    <property type="taxonomic scope" value="Bacteria"/>
</dbReference>
<dbReference type="HOGENOM" id="CLU_107907_2_0_6"/>
<dbReference type="OrthoDB" id="9807753at2"/>
<dbReference type="Proteomes" id="UP000002589">
    <property type="component" value="Chromosome"/>
</dbReference>
<dbReference type="GO" id="GO:0005737">
    <property type="term" value="C:cytoplasm"/>
    <property type="evidence" value="ECO:0007669"/>
    <property type="project" value="UniProtKB-UniRule"/>
</dbReference>
<dbReference type="GO" id="GO:0009295">
    <property type="term" value="C:nucleoid"/>
    <property type="evidence" value="ECO:0007669"/>
    <property type="project" value="UniProtKB-SubCell"/>
</dbReference>
<dbReference type="GO" id="GO:0003700">
    <property type="term" value="F:DNA-binding transcription factor activity"/>
    <property type="evidence" value="ECO:0007669"/>
    <property type="project" value="UniProtKB-UniRule"/>
</dbReference>
<dbReference type="GO" id="GO:0000976">
    <property type="term" value="F:transcription cis-regulatory region binding"/>
    <property type="evidence" value="ECO:0007669"/>
    <property type="project" value="TreeGrafter"/>
</dbReference>
<dbReference type="GO" id="GO:2000143">
    <property type="term" value="P:negative regulation of DNA-templated transcription initiation"/>
    <property type="evidence" value="ECO:0007669"/>
    <property type="project" value="TreeGrafter"/>
</dbReference>
<dbReference type="CDD" id="cd16321">
    <property type="entry name" value="MraZ_C"/>
    <property type="match status" value="1"/>
</dbReference>
<dbReference type="CDD" id="cd16320">
    <property type="entry name" value="MraZ_N"/>
    <property type="match status" value="1"/>
</dbReference>
<dbReference type="FunFam" id="3.40.1550.20:FF:000001">
    <property type="entry name" value="Transcriptional regulator MraZ"/>
    <property type="match status" value="1"/>
</dbReference>
<dbReference type="Gene3D" id="3.40.1550.20">
    <property type="entry name" value="Transcriptional regulator MraZ domain"/>
    <property type="match status" value="1"/>
</dbReference>
<dbReference type="HAMAP" id="MF_01008">
    <property type="entry name" value="MraZ"/>
    <property type="match status" value="1"/>
</dbReference>
<dbReference type="InterPro" id="IPR003444">
    <property type="entry name" value="MraZ"/>
</dbReference>
<dbReference type="InterPro" id="IPR035644">
    <property type="entry name" value="MraZ_C"/>
</dbReference>
<dbReference type="InterPro" id="IPR020603">
    <property type="entry name" value="MraZ_dom"/>
</dbReference>
<dbReference type="InterPro" id="IPR035642">
    <property type="entry name" value="MraZ_N"/>
</dbReference>
<dbReference type="InterPro" id="IPR038619">
    <property type="entry name" value="MraZ_sf"/>
</dbReference>
<dbReference type="InterPro" id="IPR007159">
    <property type="entry name" value="SpoVT-AbrB_dom"/>
</dbReference>
<dbReference type="InterPro" id="IPR037914">
    <property type="entry name" value="SpoVT-AbrB_sf"/>
</dbReference>
<dbReference type="NCBIfam" id="TIGR00242">
    <property type="entry name" value="division/cell wall cluster transcriptional repressor MraZ"/>
    <property type="match status" value="1"/>
</dbReference>
<dbReference type="PANTHER" id="PTHR34701">
    <property type="entry name" value="TRANSCRIPTIONAL REGULATOR MRAZ"/>
    <property type="match status" value="1"/>
</dbReference>
<dbReference type="PANTHER" id="PTHR34701:SF1">
    <property type="entry name" value="TRANSCRIPTIONAL REGULATOR MRAZ"/>
    <property type="match status" value="1"/>
</dbReference>
<dbReference type="Pfam" id="PF02381">
    <property type="entry name" value="MraZ"/>
    <property type="match status" value="2"/>
</dbReference>
<dbReference type="SUPFAM" id="SSF89447">
    <property type="entry name" value="AbrB/MazE/MraZ-like"/>
    <property type="match status" value="1"/>
</dbReference>
<dbReference type="PROSITE" id="PS51740">
    <property type="entry name" value="SPOVT_ABRB"/>
    <property type="match status" value="2"/>
</dbReference>
<sequence length="152" mass="17666">MFRGASAINLDTKGRIAIPVRYREPLQLEHQGRIVITVDIQSACLLLYPIHEWELIEAKLLKLSDTDKTQRSLKRMLLGYAHEVELDGNGRILLPPPLRQYANLDKRIMLVGQLNKFELWDEQAWLQQIDECQETIRSEELANNERLADFSL</sequence>
<protein>
    <recommendedName>
        <fullName>Transcriptional regulator MraZ</fullName>
    </recommendedName>
</protein>
<proteinExistence type="inferred from homology"/>
<organism>
    <name type="scientific">Shewanella sp. (strain ANA-3)</name>
    <dbReference type="NCBI Taxonomy" id="94122"/>
    <lineage>
        <taxon>Bacteria</taxon>
        <taxon>Pseudomonadati</taxon>
        <taxon>Pseudomonadota</taxon>
        <taxon>Gammaproteobacteria</taxon>
        <taxon>Alteromonadales</taxon>
        <taxon>Shewanellaceae</taxon>
        <taxon>Shewanella</taxon>
    </lineage>
</organism>
<evidence type="ECO:0000255" key="1">
    <source>
        <dbReference type="HAMAP-Rule" id="MF_01008"/>
    </source>
</evidence>
<evidence type="ECO:0000255" key="2">
    <source>
        <dbReference type="PROSITE-ProRule" id="PRU01076"/>
    </source>
</evidence>
<gene>
    <name evidence="1" type="primary">mraZ</name>
    <name type="ordered locus">Shewana3_3752</name>
</gene>
<feature type="chain" id="PRO_1000062935" description="Transcriptional regulator MraZ">
    <location>
        <begin position="1"/>
        <end position="152"/>
    </location>
</feature>
<feature type="domain" description="SpoVT-AbrB 1" evidence="2">
    <location>
        <begin position="5"/>
        <end position="52"/>
    </location>
</feature>
<feature type="domain" description="SpoVT-AbrB 2" evidence="2">
    <location>
        <begin position="81"/>
        <end position="124"/>
    </location>
</feature>
<name>MRAZ_SHESA</name>